<gene>
    <name evidence="1" type="primary">sepS</name>
    <name type="ordered locus">Mbar_A1204</name>
</gene>
<protein>
    <recommendedName>
        <fullName evidence="1">O-phosphoserine--tRNA(Cys) ligase</fullName>
        <shortName evidence="1">O-phosphoserine--tRNA ligase</shortName>
        <ecNumber evidence="1">6.1.1.27</ecNumber>
    </recommendedName>
    <alternativeName>
        <fullName evidence="1">Non-canonical O-phosphoseryl-tRNA(Cys) synthetase</fullName>
    </alternativeName>
    <alternativeName>
        <fullName evidence="1">O-phosphoseryl-tRNA(Cys) synthetase</fullName>
        <shortName evidence="1">SepRS</shortName>
    </alternativeName>
</protein>
<comment type="function">
    <text evidence="1">Catalyzes the attachment of O-phosphoserine (Sep) to tRNA(Cys).</text>
</comment>
<comment type="catalytic activity">
    <reaction evidence="1">
        <text>tRNA(Cys) + O-phospho-L-serine + ATP = O-phospho-L-seryl-tRNA(Cys) + AMP + diphosphate</text>
        <dbReference type="Rhea" id="RHEA:25678"/>
        <dbReference type="Rhea" id="RHEA-COMP:9661"/>
        <dbReference type="Rhea" id="RHEA-COMP:9719"/>
        <dbReference type="ChEBI" id="CHEBI:30616"/>
        <dbReference type="ChEBI" id="CHEBI:33019"/>
        <dbReference type="ChEBI" id="CHEBI:57524"/>
        <dbReference type="ChEBI" id="CHEBI:78442"/>
        <dbReference type="ChEBI" id="CHEBI:78551"/>
        <dbReference type="ChEBI" id="CHEBI:456215"/>
        <dbReference type="EC" id="6.1.1.27"/>
    </reaction>
</comment>
<comment type="subunit">
    <text evidence="1">Homotetramer. Interacts with SepCysS.</text>
</comment>
<comment type="similarity">
    <text evidence="1">Belongs to the class-II aminoacyl-tRNA synthetase family. O-phosphoseryl-tRNA(Cys) synthetase subfamily.</text>
</comment>
<proteinExistence type="inferred from homology"/>
<sequence length="539" mass="60683">MKFDPEKIKRDAKENFDLTWNEGKKLVRTPTLNERYPRTILKYGKAHPVYDTIQKLREAYLRMGFEEMMNPLIVDDKEVHKQFGSEALAVLDRCFYLAGLPRPNVGISDERTAEVKEILGDIGNDGVEKIRQVLHSYKKGKIEGDDLVPEISTVLGVSDALVADMIDKVFPEFKELVPQASTKTLRSHMTSGWFISLGALLERQEPPFHFFSVDRCFRREQQEDASRLMTYYSASCVIMDEGVTVDHGKAVSEGLLSQFGFEKFLFRPDEKRSKYYIPDTQTEVFAFHPKLVGSNSKYSDGWIEIATFGIYSPTALAQYDIPCPVMNLGLGVERLAMILHDAPDIRSLTYPQIPQYTEWEMSDGELAKQVFVDKVPETSEGLAIAASIVSQCELHGEEPSPCEFPSWEGEICGRKVKVSVIEPEENTKLCGPAAFNEVVAYQGDIMGIPNTKKWQKAFENHSARAGIRFIEAFAAQAAREIEEAALSGATEHIVRIRIAKVPSEVNLRIGSIAQRYVTGKKKKIDMRGPVFTSVKAEFV</sequence>
<dbReference type="EC" id="6.1.1.27" evidence="1"/>
<dbReference type="EMBL" id="CP000099">
    <property type="protein sequence ID" value="AAZ70171.1"/>
    <property type="molecule type" value="Genomic_DNA"/>
</dbReference>
<dbReference type="SMR" id="Q46D71"/>
<dbReference type="STRING" id="269797.Mbar_A1204"/>
<dbReference type="PaxDb" id="269797-Mbar_A1204"/>
<dbReference type="KEGG" id="mba:Mbar_A1204"/>
<dbReference type="eggNOG" id="arCOG00411">
    <property type="taxonomic scope" value="Archaea"/>
</dbReference>
<dbReference type="HOGENOM" id="CLU_506822_0_0_2"/>
<dbReference type="OrthoDB" id="145125at2157"/>
<dbReference type="GO" id="GO:0005524">
    <property type="term" value="F:ATP binding"/>
    <property type="evidence" value="ECO:0007669"/>
    <property type="project" value="UniProtKB-UniRule"/>
</dbReference>
<dbReference type="GO" id="GO:0043816">
    <property type="term" value="F:phosphoserine-tRNA(Cys) ligase activity"/>
    <property type="evidence" value="ECO:0007669"/>
    <property type="project" value="UniProtKB-EC"/>
</dbReference>
<dbReference type="GO" id="GO:0000049">
    <property type="term" value="F:tRNA binding"/>
    <property type="evidence" value="ECO:0007669"/>
    <property type="project" value="InterPro"/>
</dbReference>
<dbReference type="GO" id="GO:0006412">
    <property type="term" value="P:translation"/>
    <property type="evidence" value="ECO:0007669"/>
    <property type="project" value="UniProtKB-KW"/>
</dbReference>
<dbReference type="GO" id="GO:0043039">
    <property type="term" value="P:tRNA aminoacylation"/>
    <property type="evidence" value="ECO:0007669"/>
    <property type="project" value="UniProtKB-UniRule"/>
</dbReference>
<dbReference type="FunFam" id="3.30.930.10:FF:000139">
    <property type="entry name" value="O-phosphoserine--tRNA(Cys) ligase"/>
    <property type="match status" value="1"/>
</dbReference>
<dbReference type="Gene3D" id="3.30.930.10">
    <property type="entry name" value="Bira Bifunctional Protein, Domain 2"/>
    <property type="match status" value="1"/>
</dbReference>
<dbReference type="HAMAP" id="MF_01674">
    <property type="entry name" value="Sep_tRNA_synth"/>
    <property type="match status" value="1"/>
</dbReference>
<dbReference type="InterPro" id="IPR006195">
    <property type="entry name" value="aa-tRNA-synth_II"/>
</dbReference>
<dbReference type="InterPro" id="IPR045864">
    <property type="entry name" value="aa-tRNA-synth_II/BPL/LPL"/>
</dbReference>
<dbReference type="InterPro" id="IPR005246">
    <property type="entry name" value="O-Pseryl-tRNA(Cys)_ligase"/>
</dbReference>
<dbReference type="InterPro" id="IPR002319">
    <property type="entry name" value="Phenylalanyl-tRNA_Synthase"/>
</dbReference>
<dbReference type="InterPro" id="IPR041590">
    <property type="entry name" value="SepRS_C"/>
</dbReference>
<dbReference type="NCBIfam" id="TIGR00470">
    <property type="entry name" value="sepS"/>
    <property type="match status" value="1"/>
</dbReference>
<dbReference type="Pfam" id="PF18006">
    <property type="entry name" value="SepRS_C"/>
    <property type="match status" value="1"/>
</dbReference>
<dbReference type="Pfam" id="PF01409">
    <property type="entry name" value="tRNA-synt_2d"/>
    <property type="match status" value="1"/>
</dbReference>
<dbReference type="SUPFAM" id="SSF55681">
    <property type="entry name" value="Class II aaRS and biotin synthetases"/>
    <property type="match status" value="1"/>
</dbReference>
<dbReference type="PROSITE" id="PS50862">
    <property type="entry name" value="AA_TRNA_LIGASE_II"/>
    <property type="match status" value="1"/>
</dbReference>
<evidence type="ECO:0000255" key="1">
    <source>
        <dbReference type="HAMAP-Rule" id="MF_01674"/>
    </source>
</evidence>
<keyword id="KW-0030">Aminoacyl-tRNA synthetase</keyword>
<keyword id="KW-0067">ATP-binding</keyword>
<keyword id="KW-0436">Ligase</keyword>
<keyword id="KW-0547">Nucleotide-binding</keyword>
<keyword id="KW-0648">Protein biosynthesis</keyword>
<reference key="1">
    <citation type="journal article" date="2006" name="J. Bacteriol.">
        <title>The Methanosarcina barkeri genome: comparative analysis with Methanosarcina acetivorans and Methanosarcina mazei reveals extensive rearrangement within methanosarcinal genomes.</title>
        <authorList>
            <person name="Maeder D.L."/>
            <person name="Anderson I."/>
            <person name="Brettin T.S."/>
            <person name="Bruce D.C."/>
            <person name="Gilna P."/>
            <person name="Han C.S."/>
            <person name="Lapidus A."/>
            <person name="Metcalf W.W."/>
            <person name="Saunders E."/>
            <person name="Tapia R."/>
            <person name="Sowers K.R."/>
        </authorList>
    </citation>
    <scope>NUCLEOTIDE SEQUENCE [LARGE SCALE GENOMIC DNA]</scope>
    <source>
        <strain>Fusaro / DSM 804</strain>
    </source>
</reference>
<name>SEPS_METBF</name>
<feature type="chain" id="PRO_0000363761" description="O-phosphoserine--tRNA(Cys) ligase">
    <location>
        <begin position="1"/>
        <end position="539"/>
    </location>
</feature>
<feature type="binding site" evidence="1">
    <location>
        <begin position="188"/>
        <end position="190"/>
    </location>
    <ligand>
        <name>substrate</name>
    </ligand>
</feature>
<feature type="binding site" evidence="1">
    <location>
        <begin position="233"/>
        <end position="235"/>
    </location>
    <ligand>
        <name>substrate</name>
    </ligand>
</feature>
<feature type="binding site" evidence="1">
    <location>
        <begin position="275"/>
        <end position="276"/>
    </location>
    <ligand>
        <name>substrate</name>
    </ligand>
</feature>
<feature type="binding site" evidence="1">
    <location>
        <position position="327"/>
    </location>
    <ligand>
        <name>substrate</name>
    </ligand>
</feature>
<accession>Q46D71</accession>
<organism>
    <name type="scientific">Methanosarcina barkeri (strain Fusaro / DSM 804)</name>
    <dbReference type="NCBI Taxonomy" id="269797"/>
    <lineage>
        <taxon>Archaea</taxon>
        <taxon>Methanobacteriati</taxon>
        <taxon>Methanobacteriota</taxon>
        <taxon>Stenosarchaea group</taxon>
        <taxon>Methanomicrobia</taxon>
        <taxon>Methanosarcinales</taxon>
        <taxon>Methanosarcinaceae</taxon>
        <taxon>Methanosarcina</taxon>
    </lineage>
</organism>